<dbReference type="EMBL" id="Y17835">
    <property type="protein sequence ID" value="CAA76887.1"/>
    <property type="molecule type" value="mRNA"/>
</dbReference>
<dbReference type="PDB" id="1K9U">
    <property type="method" value="X-ray"/>
    <property type="resolution" value="1.75 A"/>
    <property type="chains" value="A/B=1-78"/>
</dbReference>
<dbReference type="PDB" id="2LVI">
    <property type="method" value="NMR"/>
    <property type="chains" value="A=2-78"/>
</dbReference>
<dbReference type="PDB" id="2LVJ">
    <property type="method" value="NMR"/>
    <property type="chains" value="A=2-78"/>
</dbReference>
<dbReference type="PDB" id="2LVK">
    <property type="method" value="NMR"/>
    <property type="chains" value="A=2-78"/>
</dbReference>
<dbReference type="PDB" id="5OTJ">
    <property type="method" value="X-ray"/>
    <property type="resolution" value="2.35 A"/>
    <property type="chains" value="C/D=1-78"/>
</dbReference>
<dbReference type="PDBsum" id="1K9U"/>
<dbReference type="PDBsum" id="2LVI"/>
<dbReference type="PDBsum" id="2LVJ"/>
<dbReference type="PDBsum" id="2LVK"/>
<dbReference type="PDBsum" id="5OTJ"/>
<dbReference type="BMRB" id="O82040"/>
<dbReference type="SASBDB" id="O82040"/>
<dbReference type="SMR" id="O82040"/>
<dbReference type="MINT" id="O82040"/>
<dbReference type="Allergome" id="3422">
    <property type="allergen name" value="Phl p 7.0101"/>
</dbReference>
<dbReference type="Allergome" id="570">
    <property type="allergen name" value="Phl p 7"/>
</dbReference>
<dbReference type="ABCD" id="O82040">
    <property type="antibodies" value="1 sequenced antibody"/>
</dbReference>
<dbReference type="EvolutionaryTrace" id="O82040"/>
<dbReference type="GO" id="GO:0005509">
    <property type="term" value="F:calcium ion binding"/>
    <property type="evidence" value="ECO:0007669"/>
    <property type="project" value="InterPro"/>
</dbReference>
<dbReference type="CDD" id="cd00051">
    <property type="entry name" value="EFh"/>
    <property type="match status" value="1"/>
</dbReference>
<dbReference type="FunFam" id="1.10.238.10:FF:000198">
    <property type="entry name" value="Polcalcin Phl p 7"/>
    <property type="match status" value="1"/>
</dbReference>
<dbReference type="Gene3D" id="1.10.238.10">
    <property type="entry name" value="EF-hand"/>
    <property type="match status" value="1"/>
</dbReference>
<dbReference type="InterPro" id="IPR011992">
    <property type="entry name" value="EF-hand-dom_pair"/>
</dbReference>
<dbReference type="InterPro" id="IPR018247">
    <property type="entry name" value="EF_Hand_1_Ca_BS"/>
</dbReference>
<dbReference type="InterPro" id="IPR002048">
    <property type="entry name" value="EF_hand_dom"/>
</dbReference>
<dbReference type="InterPro" id="IPR039647">
    <property type="entry name" value="EF_hand_pair_protein_CML-like"/>
</dbReference>
<dbReference type="PANTHER" id="PTHR10891">
    <property type="entry name" value="EF-HAND CALCIUM-BINDING DOMAIN CONTAINING PROTEIN"/>
    <property type="match status" value="1"/>
</dbReference>
<dbReference type="Pfam" id="PF13499">
    <property type="entry name" value="EF-hand_7"/>
    <property type="match status" value="1"/>
</dbReference>
<dbReference type="SMART" id="SM00054">
    <property type="entry name" value="EFh"/>
    <property type="match status" value="2"/>
</dbReference>
<dbReference type="SUPFAM" id="SSF47473">
    <property type="entry name" value="EF-hand"/>
    <property type="match status" value="1"/>
</dbReference>
<dbReference type="PROSITE" id="PS00018">
    <property type="entry name" value="EF_HAND_1"/>
    <property type="match status" value="2"/>
</dbReference>
<dbReference type="PROSITE" id="PS50222">
    <property type="entry name" value="EF_HAND_2"/>
    <property type="match status" value="2"/>
</dbReference>
<organism>
    <name type="scientific">Phleum pratense</name>
    <name type="common">Common timothy</name>
    <dbReference type="NCBI Taxonomy" id="15957"/>
    <lineage>
        <taxon>Eukaryota</taxon>
        <taxon>Viridiplantae</taxon>
        <taxon>Streptophyta</taxon>
        <taxon>Embryophyta</taxon>
        <taxon>Tracheophyta</taxon>
        <taxon>Spermatophyta</taxon>
        <taxon>Magnoliopsida</taxon>
        <taxon>Liliopsida</taxon>
        <taxon>Poales</taxon>
        <taxon>Poaceae</taxon>
        <taxon>BOP clade</taxon>
        <taxon>Pooideae</taxon>
        <taxon>Poodae</taxon>
        <taxon>Poeae</taxon>
        <taxon>Poeae Chloroplast Group 2 (Poeae type)</taxon>
        <taxon>Poodinae</taxon>
        <taxon>Phleinae</taxon>
        <taxon>Phleum</taxon>
    </lineage>
</organism>
<protein>
    <recommendedName>
        <fullName evidence="7">Polcalcin Phl p 7</fullName>
    </recommendedName>
    <alternativeName>
        <fullName evidence="6">Calcium-binding pollen allergen Phl p 7</fullName>
        <shortName evidence="9">Protein P7</shortName>
    </alternativeName>
    <allergenName evidence="6">Phl p 7</allergenName>
</protein>
<proteinExistence type="evidence at protein level"/>
<keyword id="KW-0002">3D-structure</keyword>
<keyword id="KW-0020">Allergen</keyword>
<keyword id="KW-0106">Calcium</keyword>
<keyword id="KW-0479">Metal-binding</keyword>
<keyword id="KW-0677">Repeat</keyword>
<comment type="function">
    <text evidence="8">May be involved in the regulation of pollen-tube growth.</text>
</comment>
<comment type="subunit">
    <text evidence="4 5">Monomer.</text>
</comment>
<comment type="tissue specificity">
    <text evidence="2">Specifically expressed in pollen.</text>
</comment>
<comment type="allergen">
    <text evidence="2 5">Causes an allergic reaction in human (PubMed:10224228, PubMed:30150373). Binds to IgE of sensitized grass pollen allergic patients (PubMed:10224228, PubMed:30150373). Triggers immediate hypersensitivity reactions by cross-linking receptor-bound IgE molecules on effector cells, and induces degranulation of basophils sensitized with IgE (PubMed:30150373). Recombinant protein induces basophil histamine release and immediate type skin reactions in sensitized allergic patients (PubMed:10224228).</text>
</comment>
<feature type="chain" id="PRO_0000073675" description="Polcalcin Phl p 7">
    <location>
        <begin position="1"/>
        <end position="78"/>
    </location>
</feature>
<feature type="domain" description="EF-hand 1" evidence="1">
    <location>
        <begin position="1"/>
        <end position="35"/>
    </location>
</feature>
<feature type="domain" description="EF-hand 2" evidence="1">
    <location>
        <begin position="35"/>
        <end position="70"/>
    </location>
</feature>
<feature type="binding site" evidence="1 3 4 5 10 11 12">
    <location>
        <position position="13"/>
    </location>
    <ligand>
        <name>Ca(2+)</name>
        <dbReference type="ChEBI" id="CHEBI:29108"/>
        <label>1</label>
    </ligand>
</feature>
<feature type="binding site" evidence="1 3 4 5 10 11 12">
    <location>
        <position position="15"/>
    </location>
    <ligand>
        <name>Ca(2+)</name>
        <dbReference type="ChEBI" id="CHEBI:29108"/>
        <label>1</label>
    </ligand>
</feature>
<feature type="binding site" evidence="1 3 4 5 10 11 12">
    <location>
        <position position="17"/>
    </location>
    <ligand>
        <name>Ca(2+)</name>
        <dbReference type="ChEBI" id="CHEBI:29108"/>
        <label>1</label>
    </ligand>
</feature>
<feature type="binding site" evidence="1 3 4 5 10 11 12">
    <location>
        <position position="19"/>
    </location>
    <ligand>
        <name>Ca(2+)</name>
        <dbReference type="ChEBI" id="CHEBI:29108"/>
        <label>1</label>
    </ligand>
</feature>
<feature type="binding site" evidence="1 3 4 5 10 11 12">
    <location>
        <position position="24"/>
    </location>
    <ligand>
        <name>Ca(2+)</name>
        <dbReference type="ChEBI" id="CHEBI:29108"/>
        <label>1</label>
    </ligand>
</feature>
<feature type="binding site" evidence="1 3 4 5 10 11 12">
    <location>
        <position position="48"/>
    </location>
    <ligand>
        <name>Ca(2+)</name>
        <dbReference type="ChEBI" id="CHEBI:29108"/>
        <label>2</label>
    </ligand>
</feature>
<feature type="binding site" evidence="1 3 4 5 10 11 12">
    <location>
        <position position="50"/>
    </location>
    <ligand>
        <name>Ca(2+)</name>
        <dbReference type="ChEBI" id="CHEBI:29108"/>
        <label>2</label>
    </ligand>
</feature>
<feature type="binding site" evidence="1 3 4 5 10 11 12">
    <location>
        <position position="52"/>
    </location>
    <ligand>
        <name>Ca(2+)</name>
        <dbReference type="ChEBI" id="CHEBI:29108"/>
        <label>2</label>
    </ligand>
</feature>
<feature type="binding site" evidence="1 3 4 5 10 11 12">
    <location>
        <position position="59"/>
    </location>
    <ligand>
        <name>Ca(2+)</name>
        <dbReference type="ChEBI" id="CHEBI:29108"/>
        <label>2</label>
    </ligand>
</feature>
<feature type="helix" evidence="13">
    <location>
        <begin position="4"/>
        <end position="12"/>
    </location>
</feature>
<feature type="strand" evidence="13">
    <location>
        <begin position="17"/>
        <end position="20"/>
    </location>
</feature>
<feature type="helix" evidence="13">
    <location>
        <begin position="22"/>
        <end position="33"/>
    </location>
</feature>
<feature type="helix" evidence="13">
    <location>
        <begin position="37"/>
        <end position="47"/>
    </location>
</feature>
<feature type="strand" evidence="13">
    <location>
        <begin position="52"/>
        <end position="56"/>
    </location>
</feature>
<feature type="helix" evidence="13">
    <location>
        <begin position="57"/>
        <end position="66"/>
    </location>
</feature>
<feature type="helix" evidence="13">
    <location>
        <begin position="68"/>
        <end position="75"/>
    </location>
</feature>
<sequence length="78" mass="8677">MADDMERIFKRFDTNGDGKISLSELTDALRTLGSTSADEVQRMMAEIDTDGDGFIDFNEFISFCNANPGLMKDVAKVF</sequence>
<evidence type="ECO:0000255" key="1">
    <source>
        <dbReference type="PROSITE-ProRule" id="PRU00448"/>
    </source>
</evidence>
<evidence type="ECO:0000269" key="2">
    <source>
    </source>
</evidence>
<evidence type="ECO:0000269" key="3">
    <source>
    </source>
</evidence>
<evidence type="ECO:0000269" key="4">
    <source>
    </source>
</evidence>
<evidence type="ECO:0000269" key="5">
    <source>
    </source>
</evidence>
<evidence type="ECO:0000303" key="6">
    <source>
    </source>
</evidence>
<evidence type="ECO:0000305" key="7"/>
<evidence type="ECO:0000305" key="8">
    <source>
    </source>
</evidence>
<evidence type="ECO:0000312" key="9">
    <source>
        <dbReference type="EMBL" id="CAA76887.1"/>
    </source>
</evidence>
<evidence type="ECO:0007744" key="10">
    <source>
        <dbReference type="PDB" id="1K9U"/>
    </source>
</evidence>
<evidence type="ECO:0007744" key="11">
    <source>
        <dbReference type="PDB" id="2LVK"/>
    </source>
</evidence>
<evidence type="ECO:0007744" key="12">
    <source>
        <dbReference type="PDB" id="5OTJ"/>
    </source>
</evidence>
<evidence type="ECO:0007829" key="13">
    <source>
        <dbReference type="PDB" id="1K9U"/>
    </source>
</evidence>
<name>POLC7_PHLPR</name>
<reference key="1">
    <citation type="journal article" date="1999" name="FASEB J.">
        <title>Calcium-dependent immunoglobulin E recognition of the apo- and calcium-bound form of a cross-reactive two EF-hand timothy grass pollen allergen, Phl p 7.</title>
        <authorList>
            <person name="Niederberger V."/>
            <person name="Hayek B."/>
            <person name="Vrtala S."/>
            <person name="Laffer S."/>
            <person name="Twardosz A."/>
            <person name="Vangelista L."/>
            <person name="Sperr W.R."/>
            <person name="Valent P."/>
            <person name="Rumpold H."/>
            <person name="Kraft D."/>
            <person name="Ehrenberger K."/>
            <person name="Valenta R."/>
            <person name="Spitzauer S."/>
        </authorList>
    </citation>
    <scope>NUCLEOTIDE SEQUENCE [MRNA]</scope>
    <scope>ALLERGEN</scope>
    <scope>TISSUE SPECIFICITY</scope>
    <source>
        <tissue>Pollen</tissue>
    </source>
</reference>
<reference key="2">
    <citation type="journal article" date="2002" name="EMBO J.">
        <title>The cross-reactive calcium-binding pollen allergen, Phl p 7, reveals a novel dimer assembly.</title>
        <authorList>
            <person name="Verdino P."/>
            <person name="Westritschnig K."/>
            <person name="Valenta R."/>
            <person name="Keller W."/>
        </authorList>
    </citation>
    <scope>X-RAY CRYSTALLOGRAPHY (1.75 ANGSTROMS) IN COMPLEX WITH CALCIUM</scope>
</reference>
<reference key="3">
    <citation type="journal article" date="2013" name="Proteins">
        <title>Solution structures of polcalcin Phl p 7 in three ligation states: Apo-, hemi-Mg2+-bound, and fully Ca2+-bound.</title>
        <authorList>
            <person name="Henzl M.T."/>
            <person name="Sirianni A.G."/>
            <person name="Wycoff W.G."/>
            <person name="Tan A."/>
            <person name="Tanner J.J."/>
        </authorList>
    </citation>
    <scope>STRUCTURE BY NMR OF 2-78 IN COMPLEX WITH CALCIUM</scope>
    <scope>SUBUNIT</scope>
</reference>
<reference key="4">
    <citation type="journal article" date="2018" name="Proc. Natl. Acad. Sci. U.S.A.">
        <title>Structure of a patient-derived antibody in complex with allergen reveals simultaneous conventional and superantigen-like recognition.</title>
        <authorList>
            <person name="Mitropoulou A.N."/>
            <person name="Bowen H."/>
            <person name="Dodev T.S."/>
            <person name="Davies A.M."/>
            <person name="Bax H.J."/>
            <person name="Beavil R.L."/>
            <person name="Beavil A.J."/>
            <person name="Gould H.J."/>
            <person name="James L.K."/>
            <person name="Sutton B.J."/>
        </authorList>
    </citation>
    <scope>X-RAY CRYSTALLOGRAPHY (2.35 ANGSTROMS) IN COMPLEX WITH CALCIUM</scope>
    <scope>SUBUNIT</scope>
    <scope>ALLERGEN</scope>
</reference>
<accession>O82040</accession>
<gene>
    <name evidence="9" type="primary">P7</name>
</gene>